<reference key="1">
    <citation type="journal article" date="2007" name="PLoS Genet.">
        <title>The complete genome sequence of Yersinia pseudotuberculosis IP31758, the causative agent of Far East scarlet-like fever.</title>
        <authorList>
            <person name="Eppinger M."/>
            <person name="Rosovitz M.J."/>
            <person name="Fricke W.F."/>
            <person name="Rasko D.A."/>
            <person name="Kokorina G."/>
            <person name="Fayolle C."/>
            <person name="Lindler L.E."/>
            <person name="Carniel E."/>
            <person name="Ravel J."/>
        </authorList>
    </citation>
    <scope>NUCLEOTIDE SEQUENCE [LARGE SCALE GENOMIC DNA]</scope>
    <source>
        <strain>IP 31758</strain>
    </source>
</reference>
<accession>A7FLI2</accession>
<name>PROB_YERP3</name>
<dbReference type="EC" id="2.7.2.11" evidence="1"/>
<dbReference type="EMBL" id="CP000720">
    <property type="protein sequence ID" value="ABS49720.1"/>
    <property type="molecule type" value="Genomic_DNA"/>
</dbReference>
<dbReference type="RefSeq" id="WP_002208701.1">
    <property type="nucleotide sequence ID" value="NC_009708.1"/>
</dbReference>
<dbReference type="SMR" id="A7FLI2"/>
<dbReference type="GeneID" id="57975496"/>
<dbReference type="KEGG" id="ypi:YpsIP31758_3150"/>
<dbReference type="HOGENOM" id="CLU_025400_2_0_6"/>
<dbReference type="UniPathway" id="UPA00098">
    <property type="reaction ID" value="UER00359"/>
</dbReference>
<dbReference type="Proteomes" id="UP000002412">
    <property type="component" value="Chromosome"/>
</dbReference>
<dbReference type="GO" id="GO:0005829">
    <property type="term" value="C:cytosol"/>
    <property type="evidence" value="ECO:0007669"/>
    <property type="project" value="TreeGrafter"/>
</dbReference>
<dbReference type="GO" id="GO:0005524">
    <property type="term" value="F:ATP binding"/>
    <property type="evidence" value="ECO:0007669"/>
    <property type="project" value="UniProtKB-KW"/>
</dbReference>
<dbReference type="GO" id="GO:0004349">
    <property type="term" value="F:glutamate 5-kinase activity"/>
    <property type="evidence" value="ECO:0007669"/>
    <property type="project" value="UniProtKB-UniRule"/>
</dbReference>
<dbReference type="GO" id="GO:0003723">
    <property type="term" value="F:RNA binding"/>
    <property type="evidence" value="ECO:0007669"/>
    <property type="project" value="InterPro"/>
</dbReference>
<dbReference type="GO" id="GO:0055129">
    <property type="term" value="P:L-proline biosynthetic process"/>
    <property type="evidence" value="ECO:0007669"/>
    <property type="project" value="UniProtKB-UniRule"/>
</dbReference>
<dbReference type="CDD" id="cd04242">
    <property type="entry name" value="AAK_G5K_ProB"/>
    <property type="match status" value="1"/>
</dbReference>
<dbReference type="CDD" id="cd21157">
    <property type="entry name" value="PUA_G5K"/>
    <property type="match status" value="1"/>
</dbReference>
<dbReference type="FunFam" id="2.30.130.10:FF:000003">
    <property type="entry name" value="Glutamate 5-kinase"/>
    <property type="match status" value="1"/>
</dbReference>
<dbReference type="FunFam" id="3.40.1160.10:FF:000006">
    <property type="entry name" value="Glutamate 5-kinase"/>
    <property type="match status" value="1"/>
</dbReference>
<dbReference type="Gene3D" id="3.40.1160.10">
    <property type="entry name" value="Acetylglutamate kinase-like"/>
    <property type="match status" value="2"/>
</dbReference>
<dbReference type="Gene3D" id="2.30.130.10">
    <property type="entry name" value="PUA domain"/>
    <property type="match status" value="1"/>
</dbReference>
<dbReference type="HAMAP" id="MF_00456">
    <property type="entry name" value="ProB"/>
    <property type="match status" value="1"/>
</dbReference>
<dbReference type="InterPro" id="IPR036393">
    <property type="entry name" value="AceGlu_kinase-like_sf"/>
</dbReference>
<dbReference type="InterPro" id="IPR001048">
    <property type="entry name" value="Asp/Glu/Uridylate_kinase"/>
</dbReference>
<dbReference type="InterPro" id="IPR041739">
    <property type="entry name" value="G5K_ProB"/>
</dbReference>
<dbReference type="InterPro" id="IPR001057">
    <property type="entry name" value="Glu/AcGlu_kinase"/>
</dbReference>
<dbReference type="InterPro" id="IPR011529">
    <property type="entry name" value="Glu_5kinase"/>
</dbReference>
<dbReference type="InterPro" id="IPR005715">
    <property type="entry name" value="Glu_5kinase/COase_Synthase"/>
</dbReference>
<dbReference type="InterPro" id="IPR019797">
    <property type="entry name" value="Glutamate_5-kinase_CS"/>
</dbReference>
<dbReference type="InterPro" id="IPR002478">
    <property type="entry name" value="PUA"/>
</dbReference>
<dbReference type="InterPro" id="IPR015947">
    <property type="entry name" value="PUA-like_sf"/>
</dbReference>
<dbReference type="InterPro" id="IPR036974">
    <property type="entry name" value="PUA_sf"/>
</dbReference>
<dbReference type="NCBIfam" id="TIGR01027">
    <property type="entry name" value="proB"/>
    <property type="match status" value="1"/>
</dbReference>
<dbReference type="PANTHER" id="PTHR43654">
    <property type="entry name" value="GLUTAMATE 5-KINASE"/>
    <property type="match status" value="1"/>
</dbReference>
<dbReference type="PANTHER" id="PTHR43654:SF1">
    <property type="entry name" value="ISOPENTENYL PHOSPHATE KINASE"/>
    <property type="match status" value="1"/>
</dbReference>
<dbReference type="Pfam" id="PF00696">
    <property type="entry name" value="AA_kinase"/>
    <property type="match status" value="1"/>
</dbReference>
<dbReference type="Pfam" id="PF01472">
    <property type="entry name" value="PUA"/>
    <property type="match status" value="1"/>
</dbReference>
<dbReference type="PIRSF" id="PIRSF000729">
    <property type="entry name" value="GK"/>
    <property type="match status" value="1"/>
</dbReference>
<dbReference type="PRINTS" id="PR00474">
    <property type="entry name" value="GLU5KINASE"/>
</dbReference>
<dbReference type="SMART" id="SM00359">
    <property type="entry name" value="PUA"/>
    <property type="match status" value="1"/>
</dbReference>
<dbReference type="SUPFAM" id="SSF53633">
    <property type="entry name" value="Carbamate kinase-like"/>
    <property type="match status" value="1"/>
</dbReference>
<dbReference type="SUPFAM" id="SSF88697">
    <property type="entry name" value="PUA domain-like"/>
    <property type="match status" value="1"/>
</dbReference>
<dbReference type="PROSITE" id="PS00902">
    <property type="entry name" value="GLUTAMATE_5_KINASE"/>
    <property type="match status" value="1"/>
</dbReference>
<dbReference type="PROSITE" id="PS50890">
    <property type="entry name" value="PUA"/>
    <property type="match status" value="1"/>
</dbReference>
<feature type="chain" id="PRO_1000081119" description="Glutamate 5-kinase">
    <location>
        <begin position="1"/>
        <end position="367"/>
    </location>
</feature>
<feature type="domain" description="PUA" evidence="1">
    <location>
        <begin position="275"/>
        <end position="353"/>
    </location>
</feature>
<feature type="binding site" evidence="1">
    <location>
        <position position="10"/>
    </location>
    <ligand>
        <name>ATP</name>
        <dbReference type="ChEBI" id="CHEBI:30616"/>
    </ligand>
</feature>
<feature type="binding site" evidence="1">
    <location>
        <position position="50"/>
    </location>
    <ligand>
        <name>substrate</name>
    </ligand>
</feature>
<feature type="binding site" evidence="1">
    <location>
        <position position="137"/>
    </location>
    <ligand>
        <name>substrate</name>
    </ligand>
</feature>
<feature type="binding site" evidence="1">
    <location>
        <position position="149"/>
    </location>
    <ligand>
        <name>substrate</name>
    </ligand>
</feature>
<feature type="binding site" evidence="1">
    <location>
        <begin position="169"/>
        <end position="170"/>
    </location>
    <ligand>
        <name>ATP</name>
        <dbReference type="ChEBI" id="CHEBI:30616"/>
    </ligand>
</feature>
<feature type="binding site" evidence="1">
    <location>
        <begin position="211"/>
        <end position="217"/>
    </location>
    <ligand>
        <name>ATP</name>
        <dbReference type="ChEBI" id="CHEBI:30616"/>
    </ligand>
</feature>
<gene>
    <name evidence="1" type="primary">proB</name>
    <name type="ordered locus">YpsIP31758_3150</name>
</gene>
<proteinExistence type="inferred from homology"/>
<sequence length="367" mass="39291">MSGSQTLVVKLGTSVLTGGSRRLNRAHIVELVRQCAQQHAKGHRIVIVTSGAIAAGREHLGYPELPATIASKQLLAAVGQSRLIQLWEQLFSIYGIHIGQMLLTRADLEDRERFLNARDTMNALLDNRIVPVINENDAVATAEIKVGDNDNLSALAAILASADKLLLLTDQAGLYTADPRNNPEAELIREVHGIDDVLRGMAGDSVSGLGTGGMATKLQAADVACRAGIDVVIAAGSQVGVIADVIDGTPVGTRFHSLETPLENRKRWIFGAPPAGEITVDDGAVFAIMERGSSLLPKGIRSVKGDFSRGEVIRIRNLNGRDLAHGVSRYNSDALRMLAGHHSQQISEILGYEYGPVAVHRDDMIVS</sequence>
<comment type="function">
    <text evidence="1">Catalyzes the transfer of a phosphate group to glutamate to form L-glutamate 5-phosphate.</text>
</comment>
<comment type="catalytic activity">
    <reaction evidence="1">
        <text>L-glutamate + ATP = L-glutamyl 5-phosphate + ADP</text>
        <dbReference type="Rhea" id="RHEA:14877"/>
        <dbReference type="ChEBI" id="CHEBI:29985"/>
        <dbReference type="ChEBI" id="CHEBI:30616"/>
        <dbReference type="ChEBI" id="CHEBI:58274"/>
        <dbReference type="ChEBI" id="CHEBI:456216"/>
        <dbReference type="EC" id="2.7.2.11"/>
    </reaction>
</comment>
<comment type="pathway">
    <text evidence="1">Amino-acid biosynthesis; L-proline biosynthesis; L-glutamate 5-semialdehyde from L-glutamate: step 1/2.</text>
</comment>
<comment type="subcellular location">
    <subcellularLocation>
        <location evidence="1">Cytoplasm</location>
    </subcellularLocation>
</comment>
<comment type="similarity">
    <text evidence="1">Belongs to the glutamate 5-kinase family.</text>
</comment>
<evidence type="ECO:0000255" key="1">
    <source>
        <dbReference type="HAMAP-Rule" id="MF_00456"/>
    </source>
</evidence>
<organism>
    <name type="scientific">Yersinia pseudotuberculosis serotype O:1b (strain IP 31758)</name>
    <dbReference type="NCBI Taxonomy" id="349747"/>
    <lineage>
        <taxon>Bacteria</taxon>
        <taxon>Pseudomonadati</taxon>
        <taxon>Pseudomonadota</taxon>
        <taxon>Gammaproteobacteria</taxon>
        <taxon>Enterobacterales</taxon>
        <taxon>Yersiniaceae</taxon>
        <taxon>Yersinia</taxon>
    </lineage>
</organism>
<protein>
    <recommendedName>
        <fullName evidence="1">Glutamate 5-kinase</fullName>
        <ecNumber evidence="1">2.7.2.11</ecNumber>
    </recommendedName>
    <alternativeName>
        <fullName evidence="1">Gamma-glutamyl kinase</fullName>
        <shortName evidence="1">GK</shortName>
    </alternativeName>
</protein>
<keyword id="KW-0028">Amino-acid biosynthesis</keyword>
<keyword id="KW-0067">ATP-binding</keyword>
<keyword id="KW-0963">Cytoplasm</keyword>
<keyword id="KW-0418">Kinase</keyword>
<keyword id="KW-0547">Nucleotide-binding</keyword>
<keyword id="KW-0641">Proline biosynthesis</keyword>
<keyword id="KW-0808">Transferase</keyword>